<dbReference type="EC" id="2.3.1.117" evidence="1"/>
<dbReference type="EMBL" id="CP001025">
    <property type="protein sequence ID" value="ACB64413.1"/>
    <property type="molecule type" value="Genomic_DNA"/>
</dbReference>
<dbReference type="RefSeq" id="WP_006478479.1">
    <property type="nucleotide sequence ID" value="NC_010551.1"/>
</dbReference>
<dbReference type="SMR" id="B1YSH7"/>
<dbReference type="GeneID" id="93191604"/>
<dbReference type="KEGG" id="bac:BamMC406_1931"/>
<dbReference type="HOGENOM" id="CLU_050859_0_1_4"/>
<dbReference type="OrthoDB" id="9775362at2"/>
<dbReference type="UniPathway" id="UPA00034">
    <property type="reaction ID" value="UER00019"/>
</dbReference>
<dbReference type="Proteomes" id="UP000001680">
    <property type="component" value="Chromosome 1"/>
</dbReference>
<dbReference type="GO" id="GO:0005737">
    <property type="term" value="C:cytoplasm"/>
    <property type="evidence" value="ECO:0007669"/>
    <property type="project" value="UniProtKB-SubCell"/>
</dbReference>
<dbReference type="GO" id="GO:0008666">
    <property type="term" value="F:2,3,4,5-tetrahydropyridine-2,6-dicarboxylate N-succinyltransferase activity"/>
    <property type="evidence" value="ECO:0007669"/>
    <property type="project" value="UniProtKB-UniRule"/>
</dbReference>
<dbReference type="GO" id="GO:0016779">
    <property type="term" value="F:nucleotidyltransferase activity"/>
    <property type="evidence" value="ECO:0007669"/>
    <property type="project" value="TreeGrafter"/>
</dbReference>
<dbReference type="GO" id="GO:0019877">
    <property type="term" value="P:diaminopimelate biosynthetic process"/>
    <property type="evidence" value="ECO:0007669"/>
    <property type="project" value="UniProtKB-UniRule"/>
</dbReference>
<dbReference type="GO" id="GO:0009089">
    <property type="term" value="P:lysine biosynthetic process via diaminopimelate"/>
    <property type="evidence" value="ECO:0007669"/>
    <property type="project" value="UniProtKB-UniRule"/>
</dbReference>
<dbReference type="CDD" id="cd03350">
    <property type="entry name" value="LbH_THP_succinylT"/>
    <property type="match status" value="1"/>
</dbReference>
<dbReference type="Gene3D" id="2.160.10.10">
    <property type="entry name" value="Hexapeptide repeat proteins"/>
    <property type="match status" value="1"/>
</dbReference>
<dbReference type="Gene3D" id="1.10.166.10">
    <property type="entry name" value="Tetrahydrodipicolinate-N-succinyltransferase, N-terminal domain"/>
    <property type="match status" value="1"/>
</dbReference>
<dbReference type="HAMAP" id="MF_00811">
    <property type="entry name" value="DapD"/>
    <property type="match status" value="1"/>
</dbReference>
<dbReference type="InterPro" id="IPR005664">
    <property type="entry name" value="DapD_Trfase_Hexpep_rpt_fam"/>
</dbReference>
<dbReference type="InterPro" id="IPR001451">
    <property type="entry name" value="Hexapep"/>
</dbReference>
<dbReference type="InterPro" id="IPR018357">
    <property type="entry name" value="Hexapep_transf_CS"/>
</dbReference>
<dbReference type="InterPro" id="IPR023180">
    <property type="entry name" value="THP_succinylTrfase_dom1"/>
</dbReference>
<dbReference type="InterPro" id="IPR037133">
    <property type="entry name" value="THP_succinylTrfase_N_sf"/>
</dbReference>
<dbReference type="InterPro" id="IPR011004">
    <property type="entry name" value="Trimer_LpxA-like_sf"/>
</dbReference>
<dbReference type="NCBIfam" id="TIGR00965">
    <property type="entry name" value="dapD"/>
    <property type="match status" value="1"/>
</dbReference>
<dbReference type="NCBIfam" id="NF008808">
    <property type="entry name" value="PRK11830.1"/>
    <property type="match status" value="1"/>
</dbReference>
<dbReference type="PANTHER" id="PTHR19136:SF52">
    <property type="entry name" value="2,3,4,5-TETRAHYDROPYRIDINE-2,6-DICARBOXYLATE N-SUCCINYLTRANSFERASE"/>
    <property type="match status" value="1"/>
</dbReference>
<dbReference type="PANTHER" id="PTHR19136">
    <property type="entry name" value="MOLYBDENUM COFACTOR GUANYLYLTRANSFERASE"/>
    <property type="match status" value="1"/>
</dbReference>
<dbReference type="Pfam" id="PF14602">
    <property type="entry name" value="Hexapep_2"/>
    <property type="match status" value="1"/>
</dbReference>
<dbReference type="Pfam" id="PF14805">
    <property type="entry name" value="THDPS_N_2"/>
    <property type="match status" value="1"/>
</dbReference>
<dbReference type="SUPFAM" id="SSF51161">
    <property type="entry name" value="Trimeric LpxA-like enzymes"/>
    <property type="match status" value="1"/>
</dbReference>
<dbReference type="PROSITE" id="PS00101">
    <property type="entry name" value="HEXAPEP_TRANSFERASES"/>
    <property type="match status" value="1"/>
</dbReference>
<proteinExistence type="inferred from homology"/>
<organism>
    <name type="scientific">Burkholderia ambifaria (strain MC40-6)</name>
    <dbReference type="NCBI Taxonomy" id="398577"/>
    <lineage>
        <taxon>Bacteria</taxon>
        <taxon>Pseudomonadati</taxon>
        <taxon>Pseudomonadota</taxon>
        <taxon>Betaproteobacteria</taxon>
        <taxon>Burkholderiales</taxon>
        <taxon>Burkholderiaceae</taxon>
        <taxon>Burkholderia</taxon>
        <taxon>Burkholderia cepacia complex</taxon>
    </lineage>
</organism>
<keyword id="KW-0012">Acyltransferase</keyword>
<keyword id="KW-0028">Amino-acid biosynthesis</keyword>
<keyword id="KW-0963">Cytoplasm</keyword>
<keyword id="KW-0220">Diaminopimelate biosynthesis</keyword>
<keyword id="KW-0457">Lysine biosynthesis</keyword>
<keyword id="KW-0677">Repeat</keyword>
<keyword id="KW-0808">Transferase</keyword>
<gene>
    <name evidence="1" type="primary">dapD</name>
    <name type="ordered locus">BamMC406_1931</name>
</gene>
<reference key="1">
    <citation type="submission" date="2008-04" db="EMBL/GenBank/DDBJ databases">
        <title>Complete sequence of chromosome 1 of Burkholderia ambifaria MC40-6.</title>
        <authorList>
            <person name="Copeland A."/>
            <person name="Lucas S."/>
            <person name="Lapidus A."/>
            <person name="Glavina del Rio T."/>
            <person name="Dalin E."/>
            <person name="Tice H."/>
            <person name="Pitluck S."/>
            <person name="Chain P."/>
            <person name="Malfatti S."/>
            <person name="Shin M."/>
            <person name="Vergez L."/>
            <person name="Lang D."/>
            <person name="Schmutz J."/>
            <person name="Larimer F."/>
            <person name="Land M."/>
            <person name="Hauser L."/>
            <person name="Kyrpides N."/>
            <person name="Lykidis A."/>
            <person name="Ramette A."/>
            <person name="Konstantinidis K."/>
            <person name="Tiedje J."/>
            <person name="Richardson P."/>
        </authorList>
    </citation>
    <scope>NUCLEOTIDE SEQUENCE [LARGE SCALE GENOMIC DNA]</scope>
    <source>
        <strain>MC40-6</strain>
    </source>
</reference>
<sequence length="275" mass="29480">MSQQLQQIIDTAWENRAELSPKAAPADVREAVAHAIEQLDKGALRVAEKIDGNWTVHQWLKKAVLLSFRLEDNAPMPAGGYSQFYDKVPSKFANYTAEDFAAGGFRVVPPAIARRGSFIAKNVVLMPSYTNIGAYVDEGTMVDTWATVGSCAQIGKNVHLSGGVGIGGVLEPLQANPVIIEDNCFIGARSEVVEGVIVEENSVISMGVYLGQSTKIYDRETGEVSYGRIPAGSVVVAGNLPSKDGSHSLYCAVIVKKVDAKTRAKVGLNELLRGD</sequence>
<feature type="chain" id="PRO_1000134031" description="2,3,4,5-tetrahydropyridine-2,6-dicarboxylate N-succinyltransferase">
    <location>
        <begin position="1"/>
        <end position="275"/>
    </location>
</feature>
<comment type="catalytic activity">
    <reaction evidence="1">
        <text>(S)-2,3,4,5-tetrahydrodipicolinate + succinyl-CoA + H2O = (S)-2-succinylamino-6-oxoheptanedioate + CoA</text>
        <dbReference type="Rhea" id="RHEA:17325"/>
        <dbReference type="ChEBI" id="CHEBI:15377"/>
        <dbReference type="ChEBI" id="CHEBI:15685"/>
        <dbReference type="ChEBI" id="CHEBI:16845"/>
        <dbReference type="ChEBI" id="CHEBI:57287"/>
        <dbReference type="ChEBI" id="CHEBI:57292"/>
        <dbReference type="EC" id="2.3.1.117"/>
    </reaction>
</comment>
<comment type="pathway">
    <text evidence="1">Amino-acid biosynthesis; L-lysine biosynthesis via DAP pathway; LL-2,6-diaminopimelate from (S)-tetrahydrodipicolinate (succinylase route): step 1/3.</text>
</comment>
<comment type="subcellular location">
    <subcellularLocation>
        <location evidence="1">Cytoplasm</location>
    </subcellularLocation>
</comment>
<comment type="similarity">
    <text evidence="1">Belongs to the transferase hexapeptide repeat family.</text>
</comment>
<accession>B1YSH7</accession>
<evidence type="ECO:0000255" key="1">
    <source>
        <dbReference type="HAMAP-Rule" id="MF_00811"/>
    </source>
</evidence>
<name>DAPD_BURA4</name>
<protein>
    <recommendedName>
        <fullName evidence="1">2,3,4,5-tetrahydropyridine-2,6-dicarboxylate N-succinyltransferase</fullName>
        <ecNumber evidence="1">2.3.1.117</ecNumber>
    </recommendedName>
    <alternativeName>
        <fullName evidence="1">Tetrahydrodipicolinate N-succinyltransferase</fullName>
        <shortName evidence="1">THP succinyltransferase</shortName>
        <shortName evidence="1">Tetrahydropicolinate succinylase</shortName>
    </alternativeName>
</protein>